<proteinExistence type="evidence at protein level"/>
<comment type="function">
    <text evidence="3 5">Mediates transport for various types of lipids in hemolymph (Probable). Acts by forming lipoprotein particles that bind lipoproteins and lipids (Probable). Binds the A.niger cell wall component alpha-1,3-glucan, a fungal pathogen-associated molecular pattern (PAMP) that activates the host immune response (PubMed:34443685).</text>
</comment>
<comment type="subcellular location">
    <subcellularLocation>
        <location evidence="3">Secreted</location>
    </subcellularLocation>
    <text evidence="3">Secreted in the hemolymph.</text>
</comment>
<comment type="tissue specificity">
    <text evidence="3">Hemolymph.</text>
</comment>
<feature type="chain" id="PRO_0000455042" description="Apolipophorin">
    <location>
        <begin position="1" status="less than"/>
        <end position="1515" status="greater than"/>
    </location>
</feature>
<feature type="domain" description="VWFD" evidence="2">
    <location>
        <begin position="952"/>
        <end position="1118"/>
    </location>
</feature>
<feature type="glycosylation site" description="N-linked (GlcNAc...) asparagine" evidence="1">
    <location>
        <position position="988"/>
    </location>
</feature>
<feature type="disulfide bond" evidence="2">
    <location>
        <begin position="976"/>
        <end position="1117"/>
    </location>
</feature>
<feature type="non-terminal residue" evidence="6">
    <location>
        <position position="1"/>
    </location>
</feature>
<feature type="non-terminal residue" evidence="6">
    <location>
        <position position="1515"/>
    </location>
</feature>
<dbReference type="EMBL" id="AY661711">
    <property type="protein sequence ID" value="AAT76806.1"/>
    <property type="molecule type" value="mRNA"/>
</dbReference>
<dbReference type="InParanoid" id="Q68YP1"/>
<dbReference type="Proteomes" id="UP000504614">
    <property type="component" value="Unplaced"/>
</dbReference>
<dbReference type="GO" id="GO:0005576">
    <property type="term" value="C:extracellular region"/>
    <property type="evidence" value="ECO:0007669"/>
    <property type="project" value="UniProtKB-SubCell"/>
</dbReference>
<dbReference type="GO" id="GO:0008289">
    <property type="term" value="F:lipid binding"/>
    <property type="evidence" value="ECO:0007669"/>
    <property type="project" value="UniProtKB-KW"/>
</dbReference>
<dbReference type="GO" id="GO:0006869">
    <property type="term" value="P:lipid transport"/>
    <property type="evidence" value="ECO:0007669"/>
    <property type="project" value="UniProtKB-KW"/>
</dbReference>
<dbReference type="InterPro" id="IPR016024">
    <property type="entry name" value="ARM-type_fold"/>
</dbReference>
<dbReference type="InterPro" id="IPR001846">
    <property type="entry name" value="VWF_type-D"/>
</dbReference>
<dbReference type="PANTHER" id="PTHR37860:SF1">
    <property type="match status" value="1"/>
</dbReference>
<dbReference type="PANTHER" id="PTHR37860">
    <property type="entry name" value="AGAP008810-PA"/>
    <property type="match status" value="1"/>
</dbReference>
<dbReference type="Pfam" id="PF00094">
    <property type="entry name" value="VWD"/>
    <property type="match status" value="1"/>
</dbReference>
<dbReference type="SMART" id="SM00216">
    <property type="entry name" value="VWD"/>
    <property type="match status" value="1"/>
</dbReference>
<dbReference type="SUPFAM" id="SSF48371">
    <property type="entry name" value="ARM repeat"/>
    <property type="match status" value="1"/>
</dbReference>
<dbReference type="PROSITE" id="PS51233">
    <property type="entry name" value="VWFD"/>
    <property type="match status" value="1"/>
</dbReference>
<organism evidence="6">
    <name type="scientific">Galleria mellonella</name>
    <name type="common">Greater wax moth</name>
    <dbReference type="NCBI Taxonomy" id="7137"/>
    <lineage>
        <taxon>Eukaryota</taxon>
        <taxon>Metazoa</taxon>
        <taxon>Ecdysozoa</taxon>
        <taxon>Arthropoda</taxon>
        <taxon>Hexapoda</taxon>
        <taxon>Insecta</taxon>
        <taxon>Pterygota</taxon>
        <taxon>Neoptera</taxon>
        <taxon>Endopterygota</taxon>
        <taxon>Lepidoptera</taxon>
        <taxon>Glossata</taxon>
        <taxon>Ditrysia</taxon>
        <taxon>Pyraloidea</taxon>
        <taxon>Pyralidae</taxon>
        <taxon>Galleriinae</taxon>
        <taxon>Galleria</taxon>
    </lineage>
</organism>
<name>APLP_GALME</name>
<accession>Q68YP1</accession>
<protein>
    <recommendedName>
        <fullName evidence="4">Apolipophorin</fullName>
    </recommendedName>
</protein>
<evidence type="ECO:0000255" key="1">
    <source>
        <dbReference type="PROSITE-ProRule" id="PRU00498"/>
    </source>
</evidence>
<evidence type="ECO:0000255" key="2">
    <source>
        <dbReference type="PROSITE-ProRule" id="PRU00580"/>
    </source>
</evidence>
<evidence type="ECO:0000269" key="3">
    <source>
    </source>
</evidence>
<evidence type="ECO:0000303" key="4">
    <source>
    </source>
</evidence>
<evidence type="ECO:0000305" key="5"/>
<evidence type="ECO:0000312" key="6">
    <source>
        <dbReference type="EMBL" id="AAT76806.1"/>
    </source>
</evidence>
<keyword id="KW-0175">Coiled coil</keyword>
<keyword id="KW-1015">Disulfide bond</keyword>
<keyword id="KW-0325">Glycoprotein</keyword>
<keyword id="KW-0445">Lipid transport</keyword>
<keyword id="KW-0446">Lipid-binding</keyword>
<keyword id="KW-1185">Reference proteome</keyword>
<keyword id="KW-0964">Secreted</keyword>
<keyword id="KW-0813">Transport</keyword>
<reference evidence="6" key="1">
    <citation type="journal article" date="2006" name="Dev. Comp. Immunol.">
        <title>Recognition and inactivation of LPS by lipophorin particles.</title>
        <authorList>
            <person name="Ma G."/>
            <person name="Hay D."/>
            <person name="Li D."/>
            <person name="Asgari S."/>
            <person name="Schmidt O."/>
        </authorList>
    </citation>
    <scope>NUCLEOTIDE SEQUENCE [MRNA]</scope>
</reference>
<reference evidence="5" key="2">
    <citation type="journal article" date="2021" name="Molecules">
        <title>Fungal alpha-1,3-Glucan as a New Pathogen-Associated Molecular Pattern in the Insect Model Host Galleria mellonella.</title>
        <authorList>
            <person name="Staczek S."/>
            <person name="Zdybicka-Barabas A."/>
            <person name="Wojda I."/>
            <person name="Wiater A."/>
            <person name="Mak P."/>
            <person name="Suder P."/>
            <person name="Skrzypiec K."/>
            <person name="Cytrynska M."/>
        </authorList>
    </citation>
    <scope>IDENTIFICATION BY MASS SPECTROMETRY</scope>
    <scope>FUNCTION</scope>
    <scope>SUBCELLULAR LOCATION</scope>
    <scope>TISSUE SPECIFICITY</scope>
</reference>
<sequence length="1515" mass="167273">EGEKHVGNVEVKAQYGKGKSVNLVVNGAAXPQEYDLDIKANAPQAENLKKLDLSLKTKNPSPDTYVVLVAIDADGRVYKSQSTVVYSEANPLIDVSYTAPNTPTSRLYVKGVKLSENQAKVEVKIVNIRDLSLDAVSEATLQKDNIILKVVANSEKLGLKNYKVDVATKDANNNGKRLEFQATNDNKNVLSGSTTFISKQENKKTIIEGSGTLKVKEEQKSANFKYIRTILTEGNEQGVETFLNLAVGESSYVAESRITNLEYKNSYVYCEEKKQCAHVELNSKVNIQKPGVVQHTVNVNFDLVKLGISPEFGLQITNEISEKKLPQYTLDLHAIKNDKKYHLNIYSHPELGKFPAGITVTLPHRVLALETRVEYPTNKGLPFPIKGEITIHPDKRKAQYKTAARFLVDVTGSDKQHALIADFGFSHPKLGKEALFKVRGNLKNSDNIIEIATSASVSCHPIFGADRESKFVLQVSPSSFKLLLDTPIVKVIELEGTAVVKENLQQGDLKFCLLQGKPVAVRALIKDYQYYEFTTDESDRKLSVIGHLDPEKRVDISADLVLSGEKKNIAHGALFLKDNLVKSEYGASKDNFDYFVTALKNDLTNLEARVKQLGEEINSDFKDILKRAQPKIQELEKAYKEDLEKIYQEVANDETLKNSQVINEVAQFLAKIIDDIVHAFKPLVDKVYNVIVETTKKIEEIYEKEIAPQIKSLYETVASIVKEFFDGLLDIVAHYAALITDFYEKHKPELEELTNTITEIFKDLTRIIVIQLKELKATVGQALEAIITTIKETQNSVVTALQAKYEELGVPESVLNAILEAHNAIRALLPTEETKNFADAVYTYVSKKLRSEKFDEQAQLRVVYEKFTVALQSLIQFLRGQFNQFGIPSLFNIESIPFITGPGQLSYTPTGVGASLSLVNQILRGDIPDPLSLIQAYRPRSLDPFDEIPAKLRGVVVNGQHIFTFDGRHLTFPGNCRYVLAHDYVDRNFTLVLQLQNGKPKSLILEDKSGTTVELKNNGQVAVNGASHGYPVEEKDVYAFRRPDGVLGIGSQYGALAYCSAKLEVCYFEINGFYLGKLRGLLGDGNNEAYDDFRLPNGKISTSESEFGNSYRLASSCPQAKCPEHSHHQQHAALPPACEQVFGGTSTLRPLSLVLDVAPFRQACIHAVAGNAENALREACSLGAGYVALGLGTLLPAVLPPACVRCTDAGGSKNIGDTYEVKLPNKQADILVVIETTKSNEKKDKDLVVPLVSQVVDTTRNLVVPWNLKSKHIAGIKVYLIGVTSRFPYPIVYDTDLKLKSAKVAFNDEHRYQYTPTIKTNCEKADSIQKTIANVIDEIRIVLGLSNINAGYLSAFETPLRPGALKHVITVNGDACKLEIGTPLQAISNIITYNQLGITHSLVASIPGLEVDGKSAPNVIGYTNDYALEFDGKKHAKEVQGAKVTLTEDNYCAELTEVTDGLVLSATNYNALGAGERKQFLLAAANAITQRILQESIVEECVCNYANPFVGRSAC</sequence>